<organism>
    <name type="scientific">Bacillus subtilis (strain 168)</name>
    <dbReference type="NCBI Taxonomy" id="224308"/>
    <lineage>
        <taxon>Bacteria</taxon>
        <taxon>Bacillati</taxon>
        <taxon>Bacillota</taxon>
        <taxon>Bacilli</taxon>
        <taxon>Bacillales</taxon>
        <taxon>Bacillaceae</taxon>
        <taxon>Bacillus</taxon>
    </lineage>
</organism>
<keyword id="KW-1185">Reference proteome</keyword>
<dbReference type="EMBL" id="AL009126">
    <property type="protein sequence ID" value="CAB14057.1"/>
    <property type="molecule type" value="Genomic_DNA"/>
</dbReference>
<dbReference type="RefSeq" id="NP_390022.1">
    <property type="nucleotide sequence ID" value="NC_000964.3"/>
</dbReference>
<dbReference type="RefSeq" id="WP_003246098.1">
    <property type="nucleotide sequence ID" value="NZ_OZ025638.1"/>
</dbReference>
<dbReference type="SMR" id="O31980"/>
<dbReference type="FunCoup" id="O31980">
    <property type="interactions" value="203"/>
</dbReference>
<dbReference type="IntAct" id="O31980">
    <property type="interactions" value="1"/>
</dbReference>
<dbReference type="STRING" id="224308.BSU21390"/>
<dbReference type="PaxDb" id="224308-BSU21390"/>
<dbReference type="DNASU" id="939136"/>
<dbReference type="EnsemblBacteria" id="CAB14057">
    <property type="protein sequence ID" value="CAB14057"/>
    <property type="gene ID" value="BSU_21390"/>
</dbReference>
<dbReference type="GeneID" id="939136"/>
<dbReference type="KEGG" id="bsu:BSU21390"/>
<dbReference type="PATRIC" id="fig|224308.179.peg.2335"/>
<dbReference type="eggNOG" id="COG4632">
    <property type="taxonomic scope" value="Bacteria"/>
</dbReference>
<dbReference type="eggNOG" id="COG5434">
    <property type="taxonomic scope" value="Bacteria"/>
</dbReference>
<dbReference type="InParanoid" id="O31980"/>
<dbReference type="OrthoDB" id="9816453at2"/>
<dbReference type="BioCyc" id="BSUB:BSU21390-MONOMER"/>
<dbReference type="Proteomes" id="UP000001570">
    <property type="component" value="Chromosome"/>
</dbReference>
<dbReference type="Gene3D" id="2.160.20.10">
    <property type="entry name" value="Single-stranded right-handed beta-helix, Pectin lyase-like"/>
    <property type="match status" value="1"/>
</dbReference>
<dbReference type="InterPro" id="IPR018711">
    <property type="entry name" value="NAGPA"/>
</dbReference>
<dbReference type="InterPro" id="IPR012334">
    <property type="entry name" value="Pectin_lyas_fold"/>
</dbReference>
<dbReference type="InterPro" id="IPR011050">
    <property type="entry name" value="Pectin_lyase_fold/virulence"/>
</dbReference>
<dbReference type="InterPro" id="IPR024535">
    <property type="entry name" value="RHGA/B-epi-like_pectate_lyase"/>
</dbReference>
<dbReference type="PANTHER" id="PTHR40446">
    <property type="entry name" value="N-ACETYLGLUCOSAMINE-1-PHOSPHODIESTER ALPHA-N-ACETYLGLUCOSAMINIDASE"/>
    <property type="match status" value="1"/>
</dbReference>
<dbReference type="PANTHER" id="PTHR40446:SF2">
    <property type="entry name" value="N-ACETYLGLUCOSAMINE-1-PHOSPHODIESTER ALPHA-N-ACETYLGLUCOSAMINIDASE"/>
    <property type="match status" value="1"/>
</dbReference>
<dbReference type="Pfam" id="PF09992">
    <property type="entry name" value="NAGPA"/>
    <property type="match status" value="1"/>
</dbReference>
<dbReference type="Pfam" id="PF12708">
    <property type="entry name" value="Pect-lyase_RHGA_epim"/>
    <property type="match status" value="1"/>
</dbReference>
<dbReference type="SUPFAM" id="SSF51126">
    <property type="entry name" value="Pectin lyase-like"/>
    <property type="match status" value="1"/>
</dbReference>
<protein>
    <recommendedName>
        <fullName>SPbeta prophage-derived uncharacterized protein YomE</fullName>
    </recommendedName>
</protein>
<proteinExistence type="predicted"/>
<accession>O31980</accession>
<sequence>MAGFYRYDQNLDKYVPMPVELLASEGEEYTAPKITQKFNEVETKTTEILNKVLTDDRYFTVTSSFKQDATLGIEYYVTKVTPKTTEAKKSMVQKTFAYDFEKSIDPTSSYFGTTNRETVLSMAKRKRSVVAINASGWRSNGEVMGLQIKDGVLYKDYDAAGYTGAEACVFFDDGTMKVYGNREVDADILISKGARNSFAFGIWLVKDSKPRTAQMTTWADLNVKHPRQAIGQRSDGTLVIITVDGRSLRSSGITAYDMPSLFLSEGCINAFLLDGGGSSQTAVEGKYINNISDGIERAVVDTLTISYPDDDTDSRFFEVQEGRGLATSLNRRVEFIESKPTWNVLDLGFSPDGLIDNTAKFKKALSDLSEKGGGKLHFPKGTYLIGKQNTTSASEKIELPSNVSIVGERRSYTKLLRNPNHSLDELLRITDHNYIEGIEIDGNSSVNKSSCRLIAGGNIKSFKMKDCSLVNATDRGVSIHGIGKSITIEGMYISNIANECINVAEGEIIKLIDSEITFSGTALWVGNAANIFTKNNLAKSLKTFVRYKNSQNAICSGNIITNNIDRAIWGSVREAVFSDNVFKQCHSDYHLYFIQEDTGTNDLIVTGNSVYSDVEGTAFIRTPSDIDRRRVSGNVGNIPSLNLD</sequence>
<feature type="chain" id="PRO_0000360589" description="SPbeta prophage-derived uncharacterized protein YomE">
    <location>
        <begin position="1"/>
        <end position="644"/>
    </location>
</feature>
<name>YOME_BACSU</name>
<reference key="1">
    <citation type="journal article" date="1997" name="Nature">
        <title>The complete genome sequence of the Gram-positive bacterium Bacillus subtilis.</title>
        <authorList>
            <person name="Kunst F."/>
            <person name="Ogasawara N."/>
            <person name="Moszer I."/>
            <person name="Albertini A.M."/>
            <person name="Alloni G."/>
            <person name="Azevedo V."/>
            <person name="Bertero M.G."/>
            <person name="Bessieres P."/>
            <person name="Bolotin A."/>
            <person name="Borchert S."/>
            <person name="Borriss R."/>
            <person name="Boursier L."/>
            <person name="Brans A."/>
            <person name="Braun M."/>
            <person name="Brignell S.C."/>
            <person name="Bron S."/>
            <person name="Brouillet S."/>
            <person name="Bruschi C.V."/>
            <person name="Caldwell B."/>
            <person name="Capuano V."/>
            <person name="Carter N.M."/>
            <person name="Choi S.-K."/>
            <person name="Codani J.-J."/>
            <person name="Connerton I.F."/>
            <person name="Cummings N.J."/>
            <person name="Daniel R.A."/>
            <person name="Denizot F."/>
            <person name="Devine K.M."/>
            <person name="Duesterhoeft A."/>
            <person name="Ehrlich S.D."/>
            <person name="Emmerson P.T."/>
            <person name="Entian K.-D."/>
            <person name="Errington J."/>
            <person name="Fabret C."/>
            <person name="Ferrari E."/>
            <person name="Foulger D."/>
            <person name="Fritz C."/>
            <person name="Fujita M."/>
            <person name="Fujita Y."/>
            <person name="Fuma S."/>
            <person name="Galizzi A."/>
            <person name="Galleron N."/>
            <person name="Ghim S.-Y."/>
            <person name="Glaser P."/>
            <person name="Goffeau A."/>
            <person name="Golightly E.J."/>
            <person name="Grandi G."/>
            <person name="Guiseppi G."/>
            <person name="Guy B.J."/>
            <person name="Haga K."/>
            <person name="Haiech J."/>
            <person name="Harwood C.R."/>
            <person name="Henaut A."/>
            <person name="Hilbert H."/>
            <person name="Holsappel S."/>
            <person name="Hosono S."/>
            <person name="Hullo M.-F."/>
            <person name="Itaya M."/>
            <person name="Jones L.-M."/>
            <person name="Joris B."/>
            <person name="Karamata D."/>
            <person name="Kasahara Y."/>
            <person name="Klaerr-Blanchard M."/>
            <person name="Klein C."/>
            <person name="Kobayashi Y."/>
            <person name="Koetter P."/>
            <person name="Koningstein G."/>
            <person name="Krogh S."/>
            <person name="Kumano M."/>
            <person name="Kurita K."/>
            <person name="Lapidus A."/>
            <person name="Lardinois S."/>
            <person name="Lauber J."/>
            <person name="Lazarevic V."/>
            <person name="Lee S.-M."/>
            <person name="Levine A."/>
            <person name="Liu H."/>
            <person name="Masuda S."/>
            <person name="Mauel C."/>
            <person name="Medigue C."/>
            <person name="Medina N."/>
            <person name="Mellado R.P."/>
            <person name="Mizuno M."/>
            <person name="Moestl D."/>
            <person name="Nakai S."/>
            <person name="Noback M."/>
            <person name="Noone D."/>
            <person name="O'Reilly M."/>
            <person name="Ogawa K."/>
            <person name="Ogiwara A."/>
            <person name="Oudega B."/>
            <person name="Park S.-H."/>
            <person name="Parro V."/>
            <person name="Pohl T.M."/>
            <person name="Portetelle D."/>
            <person name="Porwollik S."/>
            <person name="Prescott A.M."/>
            <person name="Presecan E."/>
            <person name="Pujic P."/>
            <person name="Purnelle B."/>
            <person name="Rapoport G."/>
            <person name="Rey M."/>
            <person name="Reynolds S."/>
            <person name="Rieger M."/>
            <person name="Rivolta C."/>
            <person name="Rocha E."/>
            <person name="Roche B."/>
            <person name="Rose M."/>
            <person name="Sadaie Y."/>
            <person name="Sato T."/>
            <person name="Scanlan E."/>
            <person name="Schleich S."/>
            <person name="Schroeter R."/>
            <person name="Scoffone F."/>
            <person name="Sekiguchi J."/>
            <person name="Sekowska A."/>
            <person name="Seror S.J."/>
            <person name="Serror P."/>
            <person name="Shin B.-S."/>
            <person name="Soldo B."/>
            <person name="Sorokin A."/>
            <person name="Tacconi E."/>
            <person name="Takagi T."/>
            <person name="Takahashi H."/>
            <person name="Takemaru K."/>
            <person name="Takeuchi M."/>
            <person name="Tamakoshi A."/>
            <person name="Tanaka T."/>
            <person name="Terpstra P."/>
            <person name="Tognoni A."/>
            <person name="Tosato V."/>
            <person name="Uchiyama S."/>
            <person name="Vandenbol M."/>
            <person name="Vannier F."/>
            <person name="Vassarotti A."/>
            <person name="Viari A."/>
            <person name="Wambutt R."/>
            <person name="Wedler E."/>
            <person name="Wedler H."/>
            <person name="Weitzenegger T."/>
            <person name="Winters P."/>
            <person name="Wipat A."/>
            <person name="Yamamoto H."/>
            <person name="Yamane K."/>
            <person name="Yasumoto K."/>
            <person name="Yata K."/>
            <person name="Yoshida K."/>
            <person name="Yoshikawa H.-F."/>
            <person name="Zumstein E."/>
            <person name="Yoshikawa H."/>
            <person name="Danchin A."/>
        </authorList>
    </citation>
    <scope>NUCLEOTIDE SEQUENCE [LARGE SCALE GENOMIC DNA]</scope>
    <source>
        <strain>168</strain>
    </source>
</reference>
<gene>
    <name type="primary">yomE</name>
    <name type="ordered locus">BSU21390</name>
</gene>